<feature type="chain" id="PRO_0000184707" description="Pyrrolidone-carboxylate peptidase">
    <location>
        <begin position="1"/>
        <end position="215"/>
    </location>
</feature>
<feature type="active site" evidence="1">
    <location>
        <position position="80"/>
    </location>
</feature>
<feature type="active site" evidence="1">
    <location>
        <position position="143"/>
    </location>
</feature>
<feature type="active site" evidence="1">
    <location>
        <position position="167"/>
    </location>
</feature>
<feature type="strand" evidence="2">
    <location>
        <begin position="2"/>
        <end position="9"/>
    </location>
</feature>
<feature type="helix" evidence="2">
    <location>
        <begin position="19"/>
        <end position="25"/>
    </location>
</feature>
<feature type="turn" evidence="2">
    <location>
        <begin position="26"/>
        <end position="29"/>
    </location>
</feature>
<feature type="strand" evidence="2">
    <location>
        <begin position="35"/>
        <end position="42"/>
    </location>
</feature>
<feature type="helix" evidence="2">
    <location>
        <begin position="48"/>
        <end position="60"/>
    </location>
</feature>
<feature type="strand" evidence="2">
    <location>
        <begin position="63"/>
        <end position="70"/>
    </location>
</feature>
<feature type="strand" evidence="2">
    <location>
        <begin position="75"/>
        <end position="80"/>
    </location>
</feature>
<feature type="strand" evidence="2">
    <location>
        <begin position="82"/>
        <end position="85"/>
    </location>
</feature>
<feature type="strand" evidence="2">
    <location>
        <begin position="100"/>
        <end position="102"/>
    </location>
</feature>
<feature type="strand" evidence="2">
    <location>
        <begin position="110"/>
        <end position="113"/>
    </location>
</feature>
<feature type="helix" evidence="2">
    <location>
        <begin position="118"/>
        <end position="127"/>
    </location>
</feature>
<feature type="strand" evidence="2">
    <location>
        <begin position="132"/>
        <end position="136"/>
    </location>
</feature>
<feature type="helix" evidence="2">
    <location>
        <begin position="142"/>
        <end position="154"/>
    </location>
</feature>
<feature type="helix" evidence="2">
    <location>
        <begin position="155"/>
        <end position="157"/>
    </location>
</feature>
<feature type="strand" evidence="2">
    <location>
        <begin position="160"/>
        <end position="168"/>
    </location>
</feature>
<feature type="helix" evidence="2">
    <location>
        <begin position="172"/>
        <end position="175"/>
    </location>
</feature>
<feature type="helix" evidence="2">
    <location>
        <begin position="186"/>
        <end position="200"/>
    </location>
</feature>
<sequence>MKTVLLTGFDPFGGESINPAWEVAKSLHEKTIGEYKIISKQVPTVFHKSISVLKEYIEELAPEFIICIGQAGGRPDITIERVAINIDDARIADNEGNQPVDVPVVEEGPAAYWSTLPMKAIVKKLQEEGIPASVSQTAGTFVCNHLFYGLMHELEKHDTKMKGGFIHIPFLPEQASNYPGQPSMSLSTIRKGIELAVEVTTTVEVDIVEVGGTTH</sequence>
<proteinExistence type="evidence at protein level"/>
<reference key="1">
    <citation type="journal article" date="2003" name="Nature">
        <title>The genome sequence of Bacillus anthracis Ames and comparison to closely related bacteria.</title>
        <authorList>
            <person name="Read T.D."/>
            <person name="Peterson S.N."/>
            <person name="Tourasse N.J."/>
            <person name="Baillie L.W."/>
            <person name="Paulsen I.T."/>
            <person name="Nelson K.E."/>
            <person name="Tettelin H."/>
            <person name="Fouts D.E."/>
            <person name="Eisen J.A."/>
            <person name="Gill S.R."/>
            <person name="Holtzapple E.K."/>
            <person name="Okstad O.A."/>
            <person name="Helgason E."/>
            <person name="Rilstone J."/>
            <person name="Wu M."/>
            <person name="Kolonay J.F."/>
            <person name="Beanan M.J."/>
            <person name="Dodson R.J."/>
            <person name="Brinkac L.M."/>
            <person name="Gwinn M.L."/>
            <person name="DeBoy R.T."/>
            <person name="Madpu R."/>
            <person name="Daugherty S.C."/>
            <person name="Durkin A.S."/>
            <person name="Haft D.H."/>
            <person name="Nelson W.C."/>
            <person name="Peterson J.D."/>
            <person name="Pop M."/>
            <person name="Khouri H.M."/>
            <person name="Radune D."/>
            <person name="Benton J.L."/>
            <person name="Mahamoud Y."/>
            <person name="Jiang L."/>
            <person name="Hance I.R."/>
            <person name="Weidman J.F."/>
            <person name="Berry K.J."/>
            <person name="Plaut R.D."/>
            <person name="Wolf A.M."/>
            <person name="Watkins K.L."/>
            <person name="Nierman W.C."/>
            <person name="Hazen A."/>
            <person name="Cline R.T."/>
            <person name="Redmond C."/>
            <person name="Thwaite J.E."/>
            <person name="White O."/>
            <person name="Salzberg S.L."/>
            <person name="Thomason B."/>
            <person name="Friedlander A.M."/>
            <person name="Koehler T.M."/>
            <person name="Hanna P.C."/>
            <person name="Kolstoe A.-B."/>
            <person name="Fraser C.M."/>
        </authorList>
    </citation>
    <scope>NUCLEOTIDE SEQUENCE [LARGE SCALE GENOMIC DNA]</scope>
    <source>
        <strain>Ames / isolate Porton</strain>
    </source>
</reference>
<reference key="2">
    <citation type="submission" date="2004-01" db="EMBL/GenBank/DDBJ databases">
        <title>Complete genome sequence of Bacillus anthracis Sterne.</title>
        <authorList>
            <person name="Brettin T.S."/>
            <person name="Bruce D."/>
            <person name="Challacombe J.F."/>
            <person name="Gilna P."/>
            <person name="Han C."/>
            <person name="Hill K."/>
            <person name="Hitchcock P."/>
            <person name="Jackson P."/>
            <person name="Keim P."/>
            <person name="Longmire J."/>
            <person name="Lucas S."/>
            <person name="Okinaka R."/>
            <person name="Richardson P."/>
            <person name="Rubin E."/>
            <person name="Tice H."/>
        </authorList>
    </citation>
    <scope>NUCLEOTIDE SEQUENCE [LARGE SCALE GENOMIC DNA]</scope>
    <source>
        <strain>Sterne</strain>
    </source>
</reference>
<reference key="3">
    <citation type="journal article" date="2009" name="J. Bacteriol.">
        <title>The complete genome sequence of Bacillus anthracis Ames 'Ancestor'.</title>
        <authorList>
            <person name="Ravel J."/>
            <person name="Jiang L."/>
            <person name="Stanley S.T."/>
            <person name="Wilson M.R."/>
            <person name="Decker R.S."/>
            <person name="Read T.D."/>
            <person name="Worsham P."/>
            <person name="Keim P.S."/>
            <person name="Salzberg S.L."/>
            <person name="Fraser-Liggett C.M."/>
            <person name="Rasko D.A."/>
        </authorList>
    </citation>
    <scope>NUCLEOTIDE SEQUENCE [LARGE SCALE GENOMIC DNA]</scope>
    <source>
        <strain>Ames ancestor</strain>
    </source>
</reference>
<dbReference type="EC" id="3.4.19.3" evidence="1"/>
<dbReference type="EMBL" id="AE016879">
    <property type="protein sequence ID" value="AAP26903.1"/>
    <property type="molecule type" value="Genomic_DNA"/>
</dbReference>
<dbReference type="EMBL" id="AE017225">
    <property type="protein sequence ID" value="AAT55184.1"/>
    <property type="molecule type" value="Genomic_DNA"/>
</dbReference>
<dbReference type="EMBL" id="AE017334">
    <property type="protein sequence ID" value="AAT70140.1"/>
    <property type="molecule type" value="Genomic_DNA"/>
</dbReference>
<dbReference type="RefSeq" id="NP_845417.1">
    <property type="nucleotide sequence ID" value="NC_003997.3"/>
</dbReference>
<dbReference type="RefSeq" id="WP_000859733.1">
    <property type="nucleotide sequence ID" value="NZ_WXXJ01000001.1"/>
</dbReference>
<dbReference type="RefSeq" id="YP_029133.1">
    <property type="nucleotide sequence ID" value="NC_005945.1"/>
</dbReference>
<dbReference type="PDB" id="3LAC">
    <property type="method" value="X-ray"/>
    <property type="resolution" value="2.00 A"/>
    <property type="chains" value="A/B=1-215"/>
</dbReference>
<dbReference type="PDBsum" id="3LAC"/>
<dbReference type="SMR" id="Q81NT5"/>
<dbReference type="STRING" id="261594.GBAA_3090"/>
<dbReference type="MEROPS" id="C15.001"/>
<dbReference type="DNASU" id="1086349"/>
<dbReference type="GeneID" id="45022894"/>
<dbReference type="KEGG" id="ban:BA_3090"/>
<dbReference type="KEGG" id="bar:GBAA_3090"/>
<dbReference type="KEGG" id="bat:BAS2875"/>
<dbReference type="PATRIC" id="fig|198094.11.peg.3072"/>
<dbReference type="eggNOG" id="COG2039">
    <property type="taxonomic scope" value="Bacteria"/>
</dbReference>
<dbReference type="HOGENOM" id="CLU_043960_4_0_9"/>
<dbReference type="OMA" id="VCNHVFY"/>
<dbReference type="OrthoDB" id="9779738at2"/>
<dbReference type="EvolutionaryTrace" id="Q81NT5"/>
<dbReference type="Proteomes" id="UP000000427">
    <property type="component" value="Chromosome"/>
</dbReference>
<dbReference type="Proteomes" id="UP000000594">
    <property type="component" value="Chromosome"/>
</dbReference>
<dbReference type="GO" id="GO:0005829">
    <property type="term" value="C:cytosol"/>
    <property type="evidence" value="ECO:0007669"/>
    <property type="project" value="InterPro"/>
</dbReference>
<dbReference type="GO" id="GO:0016920">
    <property type="term" value="F:pyroglutamyl-peptidase activity"/>
    <property type="evidence" value="ECO:0007669"/>
    <property type="project" value="UniProtKB-UniRule"/>
</dbReference>
<dbReference type="GO" id="GO:0006508">
    <property type="term" value="P:proteolysis"/>
    <property type="evidence" value="ECO:0007669"/>
    <property type="project" value="UniProtKB-KW"/>
</dbReference>
<dbReference type="CDD" id="cd00501">
    <property type="entry name" value="Peptidase_C15"/>
    <property type="match status" value="1"/>
</dbReference>
<dbReference type="FunFam" id="3.40.630.20:FF:000001">
    <property type="entry name" value="Pyrrolidone-carboxylate peptidase"/>
    <property type="match status" value="1"/>
</dbReference>
<dbReference type="Gene3D" id="3.40.630.20">
    <property type="entry name" value="Peptidase C15, pyroglutamyl peptidase I-like"/>
    <property type="match status" value="1"/>
</dbReference>
<dbReference type="HAMAP" id="MF_00417">
    <property type="entry name" value="Pyrrolid_peptidase"/>
    <property type="match status" value="1"/>
</dbReference>
<dbReference type="InterPro" id="IPR000816">
    <property type="entry name" value="Peptidase_C15"/>
</dbReference>
<dbReference type="InterPro" id="IPR016125">
    <property type="entry name" value="Peptidase_C15-like"/>
</dbReference>
<dbReference type="InterPro" id="IPR036440">
    <property type="entry name" value="Peptidase_C15-like_sf"/>
</dbReference>
<dbReference type="InterPro" id="IPR029762">
    <property type="entry name" value="PGP-I_bact-type"/>
</dbReference>
<dbReference type="InterPro" id="IPR033694">
    <property type="entry name" value="PGPEP1_Cys_AS"/>
</dbReference>
<dbReference type="InterPro" id="IPR033693">
    <property type="entry name" value="PGPEP1_Glu_AS"/>
</dbReference>
<dbReference type="NCBIfam" id="NF009676">
    <property type="entry name" value="PRK13197.1"/>
    <property type="match status" value="1"/>
</dbReference>
<dbReference type="NCBIfam" id="TIGR00504">
    <property type="entry name" value="pyro_pdase"/>
    <property type="match status" value="1"/>
</dbReference>
<dbReference type="PANTHER" id="PTHR23402">
    <property type="entry name" value="PROTEASE FAMILY C15 PYROGLUTAMYL-PEPTIDASE I-RELATED"/>
    <property type="match status" value="1"/>
</dbReference>
<dbReference type="PANTHER" id="PTHR23402:SF1">
    <property type="entry name" value="PYROGLUTAMYL-PEPTIDASE I"/>
    <property type="match status" value="1"/>
</dbReference>
<dbReference type="Pfam" id="PF01470">
    <property type="entry name" value="Peptidase_C15"/>
    <property type="match status" value="1"/>
</dbReference>
<dbReference type="PIRSF" id="PIRSF015592">
    <property type="entry name" value="Prld-crbxl_pptds"/>
    <property type="match status" value="1"/>
</dbReference>
<dbReference type="PRINTS" id="PR00706">
    <property type="entry name" value="PYROGLUPTASE"/>
</dbReference>
<dbReference type="SUPFAM" id="SSF53182">
    <property type="entry name" value="Pyrrolidone carboxyl peptidase (pyroglutamate aminopeptidase)"/>
    <property type="match status" value="1"/>
</dbReference>
<dbReference type="PROSITE" id="PS01334">
    <property type="entry name" value="PYRASE_CYS"/>
    <property type="match status" value="1"/>
</dbReference>
<dbReference type="PROSITE" id="PS01333">
    <property type="entry name" value="PYRASE_GLU"/>
    <property type="match status" value="1"/>
</dbReference>
<comment type="function">
    <text evidence="1">Removes 5-oxoproline from various penultimate amino acid residues except L-proline.</text>
</comment>
<comment type="catalytic activity">
    <reaction evidence="1">
        <text>Release of an N-terminal pyroglutamyl group from a polypeptide, the second amino acid generally not being Pro.</text>
        <dbReference type="EC" id="3.4.19.3"/>
    </reaction>
</comment>
<comment type="subunit">
    <text evidence="1">Homotetramer.</text>
</comment>
<comment type="subcellular location">
    <subcellularLocation>
        <location evidence="1">Cytoplasm</location>
    </subcellularLocation>
</comment>
<comment type="similarity">
    <text evidence="1">Belongs to the peptidase C15 family.</text>
</comment>
<organism>
    <name type="scientific">Bacillus anthracis</name>
    <dbReference type="NCBI Taxonomy" id="1392"/>
    <lineage>
        <taxon>Bacteria</taxon>
        <taxon>Bacillati</taxon>
        <taxon>Bacillota</taxon>
        <taxon>Bacilli</taxon>
        <taxon>Bacillales</taxon>
        <taxon>Bacillaceae</taxon>
        <taxon>Bacillus</taxon>
        <taxon>Bacillus cereus group</taxon>
    </lineage>
</organism>
<protein>
    <recommendedName>
        <fullName evidence="1">Pyrrolidone-carboxylate peptidase</fullName>
        <ecNumber evidence="1">3.4.19.3</ecNumber>
    </recommendedName>
    <alternativeName>
        <fullName evidence="1">5-oxoprolyl-peptidase</fullName>
    </alternativeName>
    <alternativeName>
        <fullName evidence="1">Pyroglutamyl-peptidase I</fullName>
        <shortName evidence="1">PGP-I</shortName>
        <shortName evidence="1">Pyrase</shortName>
    </alternativeName>
</protein>
<keyword id="KW-0002">3D-structure</keyword>
<keyword id="KW-0963">Cytoplasm</keyword>
<keyword id="KW-0378">Hydrolase</keyword>
<keyword id="KW-0645">Protease</keyword>
<keyword id="KW-1185">Reference proteome</keyword>
<keyword id="KW-0788">Thiol protease</keyword>
<gene>
    <name evidence="1" type="primary">pcp</name>
    <name type="ordered locus">BA_3090</name>
    <name type="ordered locus">GBAA_3090</name>
    <name type="ordered locus">BAS2875</name>
</gene>
<name>PCP_BACAN</name>
<evidence type="ECO:0000255" key="1">
    <source>
        <dbReference type="HAMAP-Rule" id="MF_00417"/>
    </source>
</evidence>
<evidence type="ECO:0007829" key="2">
    <source>
        <dbReference type="PDB" id="3LAC"/>
    </source>
</evidence>
<accession>Q81NT5</accession>
<accession>Q6HX05</accession>